<gene>
    <name evidence="1" type="primary">rbcL</name>
</gene>
<feature type="propeptide" id="PRO_0000042905" evidence="1">
    <location>
        <begin position="1"/>
        <end position="2"/>
    </location>
</feature>
<feature type="chain" id="PRO_0000042906" description="Ribulose bisphosphate carboxylase large chain">
    <location>
        <begin position="3"/>
        <end position="475"/>
    </location>
</feature>
<feature type="active site" description="Proton acceptor" evidence="1">
    <location>
        <position position="175"/>
    </location>
</feature>
<feature type="active site" description="Proton acceptor" evidence="1">
    <location>
        <position position="294"/>
    </location>
</feature>
<feature type="binding site" description="in homodimeric partner" evidence="1">
    <location>
        <position position="123"/>
    </location>
    <ligand>
        <name>substrate</name>
    </ligand>
</feature>
<feature type="binding site" evidence="1">
    <location>
        <position position="173"/>
    </location>
    <ligand>
        <name>substrate</name>
    </ligand>
</feature>
<feature type="binding site" evidence="1">
    <location>
        <position position="177"/>
    </location>
    <ligand>
        <name>substrate</name>
    </ligand>
</feature>
<feature type="binding site" description="via carbamate group" evidence="1">
    <location>
        <position position="201"/>
    </location>
    <ligand>
        <name>Mg(2+)</name>
        <dbReference type="ChEBI" id="CHEBI:18420"/>
    </ligand>
</feature>
<feature type="binding site" evidence="1">
    <location>
        <position position="203"/>
    </location>
    <ligand>
        <name>Mg(2+)</name>
        <dbReference type="ChEBI" id="CHEBI:18420"/>
    </ligand>
</feature>
<feature type="binding site" evidence="1">
    <location>
        <position position="204"/>
    </location>
    <ligand>
        <name>Mg(2+)</name>
        <dbReference type="ChEBI" id="CHEBI:18420"/>
    </ligand>
</feature>
<feature type="binding site" evidence="1">
    <location>
        <position position="295"/>
    </location>
    <ligand>
        <name>substrate</name>
    </ligand>
</feature>
<feature type="binding site" evidence="1">
    <location>
        <position position="327"/>
    </location>
    <ligand>
        <name>substrate</name>
    </ligand>
</feature>
<feature type="binding site" evidence="1">
    <location>
        <position position="379"/>
    </location>
    <ligand>
        <name>substrate</name>
    </ligand>
</feature>
<feature type="site" description="Transition state stabilizer" evidence="1">
    <location>
        <position position="334"/>
    </location>
</feature>
<feature type="modified residue" description="N-acetylproline" evidence="1">
    <location>
        <position position="3"/>
    </location>
</feature>
<feature type="modified residue" description="N6,N6,N6-trimethyllysine" evidence="1">
    <location>
        <position position="14"/>
    </location>
</feature>
<feature type="modified residue" description="N6-carboxylysine" evidence="1">
    <location>
        <position position="201"/>
    </location>
</feature>
<feature type="disulfide bond" description="Interchain; in linked form" evidence="1">
    <location>
        <position position="247"/>
    </location>
</feature>
<name>RBL_AMBTC</name>
<dbReference type="EC" id="4.1.1.39" evidence="1"/>
<dbReference type="EMBL" id="AJ506156">
    <property type="protein sequence ID" value="CAD45115.1"/>
    <property type="molecule type" value="Genomic_DNA"/>
</dbReference>
<dbReference type="RefSeq" id="NP_904107.1">
    <property type="nucleotide sequence ID" value="NC_005086.1"/>
</dbReference>
<dbReference type="SMR" id="Q70XZ5"/>
<dbReference type="STRING" id="13333.Q70XZ5"/>
<dbReference type="GeneID" id="2546579"/>
<dbReference type="KEGG" id="atr:2546579"/>
<dbReference type="eggNOG" id="ENOG502QTI9">
    <property type="taxonomic scope" value="Eukaryota"/>
</dbReference>
<dbReference type="OrthoDB" id="563909at2759"/>
<dbReference type="Proteomes" id="UP000017836">
    <property type="component" value="Chloroplast"/>
</dbReference>
<dbReference type="GO" id="GO:0009507">
    <property type="term" value="C:chloroplast"/>
    <property type="evidence" value="ECO:0007669"/>
    <property type="project" value="UniProtKB-SubCell"/>
</dbReference>
<dbReference type="GO" id="GO:0000287">
    <property type="term" value="F:magnesium ion binding"/>
    <property type="evidence" value="ECO:0007669"/>
    <property type="project" value="UniProtKB-UniRule"/>
</dbReference>
<dbReference type="GO" id="GO:0004497">
    <property type="term" value="F:monooxygenase activity"/>
    <property type="evidence" value="ECO:0007669"/>
    <property type="project" value="UniProtKB-KW"/>
</dbReference>
<dbReference type="GO" id="GO:0016984">
    <property type="term" value="F:ribulose-bisphosphate carboxylase activity"/>
    <property type="evidence" value="ECO:0007669"/>
    <property type="project" value="UniProtKB-UniRule"/>
</dbReference>
<dbReference type="GO" id="GO:0009853">
    <property type="term" value="P:photorespiration"/>
    <property type="evidence" value="ECO:0007669"/>
    <property type="project" value="UniProtKB-KW"/>
</dbReference>
<dbReference type="GO" id="GO:0019253">
    <property type="term" value="P:reductive pentose-phosphate cycle"/>
    <property type="evidence" value="ECO:0007669"/>
    <property type="project" value="UniProtKB-UniRule"/>
</dbReference>
<dbReference type="CDD" id="cd08212">
    <property type="entry name" value="RuBisCO_large_I"/>
    <property type="match status" value="1"/>
</dbReference>
<dbReference type="FunFam" id="3.20.20.110:FF:000001">
    <property type="entry name" value="Ribulose bisphosphate carboxylase large chain"/>
    <property type="match status" value="1"/>
</dbReference>
<dbReference type="FunFam" id="3.30.70.150:FF:000001">
    <property type="entry name" value="Ribulose bisphosphate carboxylase large chain"/>
    <property type="match status" value="1"/>
</dbReference>
<dbReference type="Gene3D" id="3.20.20.110">
    <property type="entry name" value="Ribulose bisphosphate carboxylase, large subunit, C-terminal domain"/>
    <property type="match status" value="1"/>
</dbReference>
<dbReference type="Gene3D" id="3.30.70.150">
    <property type="entry name" value="RuBisCO large subunit, N-terminal domain"/>
    <property type="match status" value="1"/>
</dbReference>
<dbReference type="HAMAP" id="MF_01338">
    <property type="entry name" value="RuBisCO_L_type1"/>
    <property type="match status" value="1"/>
</dbReference>
<dbReference type="InterPro" id="IPR033966">
    <property type="entry name" value="RuBisCO"/>
</dbReference>
<dbReference type="InterPro" id="IPR020878">
    <property type="entry name" value="RuBisCo_large_chain_AS"/>
</dbReference>
<dbReference type="InterPro" id="IPR000685">
    <property type="entry name" value="RuBisCO_lsu_C"/>
</dbReference>
<dbReference type="InterPro" id="IPR036376">
    <property type="entry name" value="RuBisCO_lsu_C_sf"/>
</dbReference>
<dbReference type="InterPro" id="IPR017443">
    <property type="entry name" value="RuBisCO_lsu_fd_N"/>
</dbReference>
<dbReference type="InterPro" id="IPR036422">
    <property type="entry name" value="RuBisCO_lsu_N_sf"/>
</dbReference>
<dbReference type="InterPro" id="IPR020888">
    <property type="entry name" value="RuBisCO_lsuI"/>
</dbReference>
<dbReference type="NCBIfam" id="NF003252">
    <property type="entry name" value="PRK04208.1"/>
    <property type="match status" value="1"/>
</dbReference>
<dbReference type="PANTHER" id="PTHR42704">
    <property type="entry name" value="RIBULOSE BISPHOSPHATE CARBOXYLASE"/>
    <property type="match status" value="1"/>
</dbReference>
<dbReference type="PANTHER" id="PTHR42704:SF19">
    <property type="entry name" value="RIBULOSE BISPHOSPHATE CARBOXYLASE LARGE CHAIN"/>
    <property type="match status" value="1"/>
</dbReference>
<dbReference type="Pfam" id="PF00016">
    <property type="entry name" value="RuBisCO_large"/>
    <property type="match status" value="1"/>
</dbReference>
<dbReference type="Pfam" id="PF02788">
    <property type="entry name" value="RuBisCO_large_N"/>
    <property type="match status" value="1"/>
</dbReference>
<dbReference type="SFLD" id="SFLDG01052">
    <property type="entry name" value="RuBisCO"/>
    <property type="match status" value="1"/>
</dbReference>
<dbReference type="SFLD" id="SFLDS00014">
    <property type="entry name" value="RuBisCO"/>
    <property type="match status" value="1"/>
</dbReference>
<dbReference type="SFLD" id="SFLDG00301">
    <property type="entry name" value="RuBisCO-like_proteins"/>
    <property type="match status" value="1"/>
</dbReference>
<dbReference type="SUPFAM" id="SSF51649">
    <property type="entry name" value="RuBisCo, C-terminal domain"/>
    <property type="match status" value="1"/>
</dbReference>
<dbReference type="SUPFAM" id="SSF54966">
    <property type="entry name" value="RuBisCO, large subunit, small (N-terminal) domain"/>
    <property type="match status" value="1"/>
</dbReference>
<dbReference type="PROSITE" id="PS00157">
    <property type="entry name" value="RUBISCO_LARGE"/>
    <property type="match status" value="1"/>
</dbReference>
<keyword id="KW-0007">Acetylation</keyword>
<keyword id="KW-0113">Calvin cycle</keyword>
<keyword id="KW-0120">Carbon dioxide fixation</keyword>
<keyword id="KW-0150">Chloroplast</keyword>
<keyword id="KW-1015">Disulfide bond</keyword>
<keyword id="KW-0456">Lyase</keyword>
<keyword id="KW-0460">Magnesium</keyword>
<keyword id="KW-0479">Metal-binding</keyword>
<keyword id="KW-0488">Methylation</keyword>
<keyword id="KW-0503">Monooxygenase</keyword>
<keyword id="KW-0560">Oxidoreductase</keyword>
<keyword id="KW-0601">Photorespiration</keyword>
<keyword id="KW-0602">Photosynthesis</keyword>
<keyword id="KW-0934">Plastid</keyword>
<keyword id="KW-1185">Reference proteome</keyword>
<comment type="function">
    <text evidence="1">RuBisCO catalyzes two reactions: the carboxylation of D-ribulose 1,5-bisphosphate, the primary event in carbon dioxide fixation, as well as the oxidative fragmentation of the pentose substrate in the photorespiration process. Both reactions occur simultaneously and in competition at the same active site.</text>
</comment>
<comment type="catalytic activity">
    <reaction evidence="1">
        <text>2 (2R)-3-phosphoglycerate + 2 H(+) = D-ribulose 1,5-bisphosphate + CO2 + H2O</text>
        <dbReference type="Rhea" id="RHEA:23124"/>
        <dbReference type="ChEBI" id="CHEBI:15377"/>
        <dbReference type="ChEBI" id="CHEBI:15378"/>
        <dbReference type="ChEBI" id="CHEBI:16526"/>
        <dbReference type="ChEBI" id="CHEBI:57870"/>
        <dbReference type="ChEBI" id="CHEBI:58272"/>
        <dbReference type="EC" id="4.1.1.39"/>
    </reaction>
</comment>
<comment type="catalytic activity">
    <reaction evidence="1">
        <text>D-ribulose 1,5-bisphosphate + O2 = 2-phosphoglycolate + (2R)-3-phosphoglycerate + 2 H(+)</text>
        <dbReference type="Rhea" id="RHEA:36631"/>
        <dbReference type="ChEBI" id="CHEBI:15378"/>
        <dbReference type="ChEBI" id="CHEBI:15379"/>
        <dbReference type="ChEBI" id="CHEBI:57870"/>
        <dbReference type="ChEBI" id="CHEBI:58033"/>
        <dbReference type="ChEBI" id="CHEBI:58272"/>
    </reaction>
</comment>
<comment type="cofactor">
    <cofactor evidence="1">
        <name>Mg(2+)</name>
        <dbReference type="ChEBI" id="CHEBI:18420"/>
    </cofactor>
    <text evidence="1">Binds 1 Mg(2+) ion per subunit.</text>
</comment>
<comment type="subunit">
    <text evidence="1">Heterohexadecamer of 8 large chains and 8 small chains; disulfide-linked. The disulfide link is formed within the large subunit homodimers.</text>
</comment>
<comment type="subcellular location">
    <subcellularLocation>
        <location>Plastid</location>
        <location>Chloroplast</location>
    </subcellularLocation>
</comment>
<comment type="PTM">
    <text evidence="1">The disulfide bond which can form in the large chain dimeric partners within the hexadecamer appears to be associated with oxidative stress and protein turnover.</text>
</comment>
<comment type="miscellaneous">
    <text evidence="1">The basic functional RuBisCO is composed of a large chain homodimer in a 'head-to-tail' conformation. In form I RuBisCO this homodimer is arranged in a barrel-like tetramer with the small subunits forming a tetrameric 'cap' on each end of the 'barrel'.</text>
</comment>
<comment type="similarity">
    <text evidence="1">Belongs to the RuBisCO large chain family. Type I subfamily.</text>
</comment>
<geneLocation type="chloroplast"/>
<accession>Q70XZ5</accession>
<sequence>MSPKTETKASAGFKAGVKDYRLTYYTPDYETLATDILAAFRVTPQPGVPPEEAGAAVAAESSTGTWTTVWTDGLTSLDRYKGRCYHIEPVAGEENQYIAYVAYPLDLFEEGSVTNMFTSIVGNVFGFKALRALRLEDLRIPPAYSKSFQGPPHGIQVERDKLNKYGRPLLGCTIKPKLGLSAKNYGRAVYECLRGGLDFTKDDENVNSQPFMRWRDRFLFCAEALYKAQAETGEIKGHYLNATAGTCEEMMKRAVFARELGVPIVMHDYLTGGFTANTSLAHYCRDNGLLLHIHRAMHAVIDRQRNHGIHFRVLAKALRMSGGDHIHAGTVVGKLEGERDVTLGFVDLLRDDFIEKDRSRGIYFTQDWVSMPGVLPVASGGIHVWHMPALTEIFGDDSVLQFGGGTLGHPWGNAPGAVANRVALEACVQARNEGRDLAREGNEVIREASRWSPELAAACEVWKEIKFEFEAMDVL</sequence>
<proteinExistence type="inferred from homology"/>
<protein>
    <recommendedName>
        <fullName evidence="1">Ribulose bisphosphate carboxylase large chain</fullName>
        <shortName evidence="1">RuBisCO large subunit</shortName>
        <ecNumber evidence="1">4.1.1.39</ecNumber>
    </recommendedName>
</protein>
<organism>
    <name type="scientific">Amborella trichopoda</name>
    <dbReference type="NCBI Taxonomy" id="13333"/>
    <lineage>
        <taxon>Eukaryota</taxon>
        <taxon>Viridiplantae</taxon>
        <taxon>Streptophyta</taxon>
        <taxon>Embryophyta</taxon>
        <taxon>Tracheophyta</taxon>
        <taxon>Spermatophyta</taxon>
        <taxon>Magnoliopsida</taxon>
        <taxon>Amborellales</taxon>
        <taxon>Amborellaceae</taxon>
        <taxon>Amborella</taxon>
    </lineage>
</organism>
<evidence type="ECO:0000255" key="1">
    <source>
        <dbReference type="HAMAP-Rule" id="MF_01338"/>
    </source>
</evidence>
<reference key="1">
    <citation type="journal article" date="2003" name="Mol. Biol. Evol.">
        <title>Analysis of the Amborella trichopoda chloroplast genome sequence suggests that Amborella is not a basal angiosperm.</title>
        <authorList>
            <person name="Goremykin V.V."/>
            <person name="Hirsch-Ernst K.I."/>
            <person name="Wolfl S."/>
            <person name="Hellwig F.H."/>
        </authorList>
    </citation>
    <scope>NUCLEOTIDE SEQUENCE [LARGE SCALE GENOMIC DNA]</scope>
</reference>